<accession>B5FIY3</accession>
<comment type="function">
    <text evidence="1">Binds to DNA non-specifically. Could be a regulatory factor involved in maltose metabolism.</text>
</comment>
<comment type="similarity">
    <text evidence="1">Belongs to the SfsA family.</text>
</comment>
<evidence type="ECO:0000255" key="1">
    <source>
        <dbReference type="HAMAP-Rule" id="MF_00095"/>
    </source>
</evidence>
<gene>
    <name evidence="1" type="primary">sfsA</name>
    <name type="ordered locus">SeD_A0203</name>
</gene>
<dbReference type="EMBL" id="CP001144">
    <property type="protein sequence ID" value="ACH74402.1"/>
    <property type="molecule type" value="Genomic_DNA"/>
</dbReference>
<dbReference type="RefSeq" id="WP_000899412.1">
    <property type="nucleotide sequence ID" value="NC_011205.1"/>
</dbReference>
<dbReference type="SMR" id="B5FIY3"/>
<dbReference type="KEGG" id="sed:SeD_A0203"/>
<dbReference type="HOGENOM" id="CLU_052299_2_0_6"/>
<dbReference type="Proteomes" id="UP000008322">
    <property type="component" value="Chromosome"/>
</dbReference>
<dbReference type="GO" id="GO:0003677">
    <property type="term" value="F:DNA binding"/>
    <property type="evidence" value="ECO:0007669"/>
    <property type="project" value="UniProtKB-KW"/>
</dbReference>
<dbReference type="CDD" id="cd22359">
    <property type="entry name" value="SfsA-like_bacterial"/>
    <property type="match status" value="1"/>
</dbReference>
<dbReference type="FunFam" id="2.40.50.580:FF:000001">
    <property type="entry name" value="Sugar fermentation stimulation protein A"/>
    <property type="match status" value="1"/>
</dbReference>
<dbReference type="FunFam" id="3.40.1350.60:FF:000001">
    <property type="entry name" value="Sugar fermentation stimulation protein A"/>
    <property type="match status" value="1"/>
</dbReference>
<dbReference type="Gene3D" id="2.40.50.580">
    <property type="match status" value="1"/>
</dbReference>
<dbReference type="Gene3D" id="3.40.1350.60">
    <property type="match status" value="1"/>
</dbReference>
<dbReference type="HAMAP" id="MF_00095">
    <property type="entry name" value="SfsA"/>
    <property type="match status" value="1"/>
</dbReference>
<dbReference type="InterPro" id="IPR005224">
    <property type="entry name" value="SfsA"/>
</dbReference>
<dbReference type="InterPro" id="IPR040452">
    <property type="entry name" value="SfsA_C"/>
</dbReference>
<dbReference type="InterPro" id="IPR041465">
    <property type="entry name" value="SfsA_N"/>
</dbReference>
<dbReference type="NCBIfam" id="TIGR00230">
    <property type="entry name" value="sfsA"/>
    <property type="match status" value="1"/>
</dbReference>
<dbReference type="PANTHER" id="PTHR30545">
    <property type="entry name" value="SUGAR FERMENTATION STIMULATION PROTEIN A"/>
    <property type="match status" value="1"/>
</dbReference>
<dbReference type="PANTHER" id="PTHR30545:SF2">
    <property type="entry name" value="SUGAR FERMENTATION STIMULATION PROTEIN A"/>
    <property type="match status" value="1"/>
</dbReference>
<dbReference type="Pfam" id="PF03749">
    <property type="entry name" value="SfsA"/>
    <property type="match status" value="1"/>
</dbReference>
<dbReference type="Pfam" id="PF17746">
    <property type="entry name" value="SfsA_N"/>
    <property type="match status" value="1"/>
</dbReference>
<organism>
    <name type="scientific">Salmonella dublin (strain CT_02021853)</name>
    <dbReference type="NCBI Taxonomy" id="439851"/>
    <lineage>
        <taxon>Bacteria</taxon>
        <taxon>Pseudomonadati</taxon>
        <taxon>Pseudomonadota</taxon>
        <taxon>Gammaproteobacteria</taxon>
        <taxon>Enterobacterales</taxon>
        <taxon>Enterobacteriaceae</taxon>
        <taxon>Salmonella</taxon>
    </lineage>
</organism>
<proteinExistence type="inferred from homology"/>
<name>SFSA_SALDC</name>
<reference key="1">
    <citation type="journal article" date="2011" name="J. Bacteriol.">
        <title>Comparative genomics of 28 Salmonella enterica isolates: evidence for CRISPR-mediated adaptive sublineage evolution.</title>
        <authorList>
            <person name="Fricke W.F."/>
            <person name="Mammel M.K."/>
            <person name="McDermott P.F."/>
            <person name="Tartera C."/>
            <person name="White D.G."/>
            <person name="Leclerc J.E."/>
            <person name="Ravel J."/>
            <person name="Cebula T.A."/>
        </authorList>
    </citation>
    <scope>NUCLEOTIDE SEQUENCE [LARGE SCALE GENOMIC DNA]</scope>
    <source>
        <strain>CT_02021853</strain>
    </source>
</reference>
<feature type="chain" id="PRO_1000093586" description="Sugar fermentation stimulation protein A">
    <location>
        <begin position="1"/>
        <end position="234"/>
    </location>
</feature>
<feature type="DNA-binding region" description="H-T-H motif" evidence="1">
    <location>
        <begin position="201"/>
        <end position="220"/>
    </location>
</feature>
<keyword id="KW-0238">DNA-binding</keyword>
<protein>
    <recommendedName>
        <fullName evidence="1">Sugar fermentation stimulation protein A</fullName>
    </recommendedName>
</protein>
<sequence length="234" mass="26160">MLFSPPLQRATLIQRYKRFLADVITPDGTTLTLHCPNTGAMTGCATPGDTVWYSTSENTKRKYPHTWELTETQSGAFICVNTLRANQLTKEAIQENRLPALAGYNILKSEVKYGAERSRIDFMLQADFRPDCYIEVKSVTLAEKENGYFPDAITERGQKHLRELMGVAAAGHRAVVVFAVLHSAITRFSPARHIDIKYAQLLSEAQNKGVEVLAYKAELSAQKMELNEPVPITL</sequence>